<proteinExistence type="inferred from homology"/>
<reference key="1">
    <citation type="journal article" date="2001" name="Nature">
        <title>Complete genome sequence of Salmonella enterica serovar Typhimurium LT2.</title>
        <authorList>
            <person name="McClelland M."/>
            <person name="Sanderson K.E."/>
            <person name="Spieth J."/>
            <person name="Clifton S.W."/>
            <person name="Latreille P."/>
            <person name="Courtney L."/>
            <person name="Porwollik S."/>
            <person name="Ali J."/>
            <person name="Dante M."/>
            <person name="Du F."/>
            <person name="Hou S."/>
            <person name="Layman D."/>
            <person name="Leonard S."/>
            <person name="Nguyen C."/>
            <person name="Scott K."/>
            <person name="Holmes A."/>
            <person name="Grewal N."/>
            <person name="Mulvaney E."/>
            <person name="Ryan E."/>
            <person name="Sun H."/>
            <person name="Florea L."/>
            <person name="Miller W."/>
            <person name="Stoneking T."/>
            <person name="Nhan M."/>
            <person name="Waterston R."/>
            <person name="Wilson R.K."/>
        </authorList>
    </citation>
    <scope>NUCLEOTIDE SEQUENCE [LARGE SCALE GENOMIC DNA]</scope>
    <source>
        <strain>LT2 / SGSC1412 / ATCC 700720</strain>
    </source>
</reference>
<organism>
    <name type="scientific">Salmonella typhimurium (strain LT2 / SGSC1412 / ATCC 700720)</name>
    <dbReference type="NCBI Taxonomy" id="99287"/>
    <lineage>
        <taxon>Bacteria</taxon>
        <taxon>Pseudomonadati</taxon>
        <taxon>Pseudomonadota</taxon>
        <taxon>Gammaproteobacteria</taxon>
        <taxon>Enterobacterales</taxon>
        <taxon>Enterobacteriaceae</taxon>
        <taxon>Salmonella</taxon>
    </lineage>
</organism>
<evidence type="ECO:0000255" key="1">
    <source>
        <dbReference type="HAMAP-Rule" id="MF_00455"/>
    </source>
</evidence>
<comment type="catalytic activity">
    <reaction evidence="1">
        <text>alpha-D-xylose = alpha-D-xylulofuranose</text>
        <dbReference type="Rhea" id="RHEA:22816"/>
        <dbReference type="ChEBI" id="CHEBI:28518"/>
        <dbReference type="ChEBI" id="CHEBI:188998"/>
        <dbReference type="EC" id="5.3.1.5"/>
    </reaction>
</comment>
<comment type="cofactor">
    <cofactor evidence="1">
        <name>Mg(2+)</name>
        <dbReference type="ChEBI" id="CHEBI:18420"/>
    </cofactor>
    <text evidence="1">Binds 2 magnesium ions per subunit.</text>
</comment>
<comment type="subunit">
    <text evidence="1">Homotetramer.</text>
</comment>
<comment type="subcellular location">
    <subcellularLocation>
        <location evidence="1">Cytoplasm</location>
    </subcellularLocation>
</comment>
<comment type="similarity">
    <text evidence="1">Belongs to the xylose isomerase family.</text>
</comment>
<dbReference type="EC" id="5.3.1.5" evidence="1"/>
<dbReference type="EMBL" id="AE006468">
    <property type="protein sequence ID" value="AAL22520.1"/>
    <property type="molecule type" value="Genomic_DNA"/>
</dbReference>
<dbReference type="RefSeq" id="NP_462561.1">
    <property type="nucleotide sequence ID" value="NC_003197.2"/>
</dbReference>
<dbReference type="RefSeq" id="WP_001149561.1">
    <property type="nucleotide sequence ID" value="NC_003197.2"/>
</dbReference>
<dbReference type="SMR" id="Q8ZL90"/>
<dbReference type="STRING" id="99287.STM3661"/>
<dbReference type="PaxDb" id="99287-STM3661"/>
<dbReference type="GeneID" id="1255185"/>
<dbReference type="KEGG" id="stm:STM3661"/>
<dbReference type="PATRIC" id="fig|99287.12.peg.3872"/>
<dbReference type="HOGENOM" id="CLU_037261_1_0_6"/>
<dbReference type="OMA" id="IAYWHTF"/>
<dbReference type="PhylomeDB" id="Q8ZL90"/>
<dbReference type="BioCyc" id="SENT99287:STM3661-MONOMER"/>
<dbReference type="Proteomes" id="UP000001014">
    <property type="component" value="Chromosome"/>
</dbReference>
<dbReference type="GO" id="GO:0005737">
    <property type="term" value="C:cytoplasm"/>
    <property type="evidence" value="ECO:0007669"/>
    <property type="project" value="UniProtKB-SubCell"/>
</dbReference>
<dbReference type="GO" id="GO:0008740">
    <property type="term" value="F:L-rhamnose isomerase activity"/>
    <property type="evidence" value="ECO:0000318"/>
    <property type="project" value="GO_Central"/>
</dbReference>
<dbReference type="GO" id="GO:0000287">
    <property type="term" value="F:magnesium ion binding"/>
    <property type="evidence" value="ECO:0007669"/>
    <property type="project" value="UniProtKB-UniRule"/>
</dbReference>
<dbReference type="GO" id="GO:0009045">
    <property type="term" value="F:xylose isomerase activity"/>
    <property type="evidence" value="ECO:0007669"/>
    <property type="project" value="UniProtKB-UniRule"/>
</dbReference>
<dbReference type="GO" id="GO:0042732">
    <property type="term" value="P:D-xylose metabolic process"/>
    <property type="evidence" value="ECO:0007669"/>
    <property type="project" value="UniProtKB-UniRule"/>
</dbReference>
<dbReference type="GO" id="GO:0019324">
    <property type="term" value="P:L-lyxose metabolic process"/>
    <property type="evidence" value="ECO:0000318"/>
    <property type="project" value="GO_Central"/>
</dbReference>
<dbReference type="GO" id="GO:0019301">
    <property type="term" value="P:rhamnose catabolic process"/>
    <property type="evidence" value="ECO:0000318"/>
    <property type="project" value="GO_Central"/>
</dbReference>
<dbReference type="FunFam" id="3.20.20.150:FF:000002">
    <property type="entry name" value="Xylose isomerase"/>
    <property type="match status" value="1"/>
</dbReference>
<dbReference type="Gene3D" id="3.20.20.150">
    <property type="entry name" value="Divalent-metal-dependent TIM barrel enzymes"/>
    <property type="match status" value="1"/>
</dbReference>
<dbReference type="HAMAP" id="MF_00455">
    <property type="entry name" value="Xylose_isom_A"/>
    <property type="match status" value="1"/>
</dbReference>
<dbReference type="InterPro" id="IPR036237">
    <property type="entry name" value="Xyl_isomerase-like_sf"/>
</dbReference>
<dbReference type="InterPro" id="IPR013452">
    <property type="entry name" value="Xylose_isom_bac"/>
</dbReference>
<dbReference type="InterPro" id="IPR001998">
    <property type="entry name" value="Xylose_isomerase"/>
</dbReference>
<dbReference type="NCBIfam" id="NF003998">
    <property type="entry name" value="PRK05474.1"/>
    <property type="match status" value="1"/>
</dbReference>
<dbReference type="NCBIfam" id="TIGR02630">
    <property type="entry name" value="xylose_isom_A"/>
    <property type="match status" value="1"/>
</dbReference>
<dbReference type="PANTHER" id="PTHR48408">
    <property type="match status" value="1"/>
</dbReference>
<dbReference type="PANTHER" id="PTHR48408:SF1">
    <property type="entry name" value="XYLOSE ISOMERASE"/>
    <property type="match status" value="1"/>
</dbReference>
<dbReference type="PRINTS" id="PR00688">
    <property type="entry name" value="XYLOSISMRASE"/>
</dbReference>
<dbReference type="SUPFAM" id="SSF51658">
    <property type="entry name" value="Xylose isomerase-like"/>
    <property type="match status" value="1"/>
</dbReference>
<dbReference type="PROSITE" id="PS51415">
    <property type="entry name" value="XYLOSE_ISOMERASE"/>
    <property type="match status" value="1"/>
</dbReference>
<sequence>MQAYFDQLDRVRYEGPQSTNPLAFRHYNPDELVLGKRMEDHLRFAACYWHTFCWNGADMFGVGAFNRPWQQPGEALELAKRKADVAFEFFHKLNVPFYCFHDVDVSPEGASLKEYKNNFAQMVDVLAAKQEQSGVKLLWGTANCFTNPRYGAGAATNPDPEVFSWAATQVVTAMNATHKLGGENYVLWGGREGYETLLNTDLRQEREQIGRFMQMVVEHKHKMGFQGTLLIEPKPQEPTKHQYDYDVATVYGFLKQFGLEKEIKVNIEANHATLAGHSFHHEIATAIALGIFGSVDANRGDAQLGWDTDQFPISVEENALVMYEILKAGGFTTGGLNFDAKVRRQSTDKYDLFYGHIGAMDTMALSLKIAARMVEDGELDKRVAKRYAGWNGELGQQILKGQLSLGELAQYAEQHNLAPVHQSGHQELLENLVNRYLFDK</sequence>
<gene>
    <name evidence="1" type="primary">xylA</name>
    <name type="ordered locus">STM3661</name>
</gene>
<accession>Q8ZL90</accession>
<protein>
    <recommendedName>
        <fullName evidence="1">Xylose isomerase</fullName>
        <ecNumber evidence="1">5.3.1.5</ecNumber>
    </recommendedName>
</protein>
<keyword id="KW-0119">Carbohydrate metabolism</keyword>
<keyword id="KW-0963">Cytoplasm</keyword>
<keyword id="KW-0413">Isomerase</keyword>
<keyword id="KW-0460">Magnesium</keyword>
<keyword id="KW-0479">Metal-binding</keyword>
<keyword id="KW-1185">Reference proteome</keyword>
<keyword id="KW-0859">Xylose metabolism</keyword>
<name>XYLA_SALTY</name>
<feature type="chain" id="PRO_0000195793" description="Xylose isomerase">
    <location>
        <begin position="1"/>
        <end position="440"/>
    </location>
</feature>
<feature type="active site" evidence="1">
    <location>
        <position position="101"/>
    </location>
</feature>
<feature type="active site" evidence="1">
    <location>
        <position position="104"/>
    </location>
</feature>
<feature type="binding site" evidence="1">
    <location>
        <position position="232"/>
    </location>
    <ligand>
        <name>Mg(2+)</name>
        <dbReference type="ChEBI" id="CHEBI:18420"/>
        <label>1</label>
    </ligand>
</feature>
<feature type="binding site" evidence="1">
    <location>
        <position position="268"/>
    </location>
    <ligand>
        <name>Mg(2+)</name>
        <dbReference type="ChEBI" id="CHEBI:18420"/>
        <label>1</label>
    </ligand>
</feature>
<feature type="binding site" evidence="1">
    <location>
        <position position="268"/>
    </location>
    <ligand>
        <name>Mg(2+)</name>
        <dbReference type="ChEBI" id="CHEBI:18420"/>
        <label>2</label>
    </ligand>
</feature>
<feature type="binding site" evidence="1">
    <location>
        <position position="271"/>
    </location>
    <ligand>
        <name>Mg(2+)</name>
        <dbReference type="ChEBI" id="CHEBI:18420"/>
        <label>2</label>
    </ligand>
</feature>
<feature type="binding site" evidence="1">
    <location>
        <position position="296"/>
    </location>
    <ligand>
        <name>Mg(2+)</name>
        <dbReference type="ChEBI" id="CHEBI:18420"/>
        <label>1</label>
    </ligand>
</feature>
<feature type="binding site" evidence="1">
    <location>
        <position position="307"/>
    </location>
    <ligand>
        <name>Mg(2+)</name>
        <dbReference type="ChEBI" id="CHEBI:18420"/>
        <label>2</label>
    </ligand>
</feature>
<feature type="binding site" evidence="1">
    <location>
        <position position="309"/>
    </location>
    <ligand>
        <name>Mg(2+)</name>
        <dbReference type="ChEBI" id="CHEBI:18420"/>
        <label>2</label>
    </ligand>
</feature>
<feature type="binding site" evidence="1">
    <location>
        <position position="339"/>
    </location>
    <ligand>
        <name>Mg(2+)</name>
        <dbReference type="ChEBI" id="CHEBI:18420"/>
        <label>1</label>
    </ligand>
</feature>